<accession>Q7PQ25</accession>
<protein>
    <recommendedName>
        <fullName>Coiled-coil domain-containing protein AGAP005037</fullName>
    </recommendedName>
</protein>
<keyword id="KW-0175">Coiled coil</keyword>
<keyword id="KW-1185">Reference proteome</keyword>
<name>CCDCX_ANOGA</name>
<organism>
    <name type="scientific">Anopheles gambiae</name>
    <name type="common">African malaria mosquito</name>
    <dbReference type="NCBI Taxonomy" id="7165"/>
    <lineage>
        <taxon>Eukaryota</taxon>
        <taxon>Metazoa</taxon>
        <taxon>Ecdysozoa</taxon>
        <taxon>Arthropoda</taxon>
        <taxon>Hexapoda</taxon>
        <taxon>Insecta</taxon>
        <taxon>Pterygota</taxon>
        <taxon>Neoptera</taxon>
        <taxon>Endopterygota</taxon>
        <taxon>Diptera</taxon>
        <taxon>Nematocera</taxon>
        <taxon>Culicoidea</taxon>
        <taxon>Culicidae</taxon>
        <taxon>Anophelinae</taxon>
        <taxon>Anopheles</taxon>
    </lineage>
</organism>
<dbReference type="EMBL" id="AAAB01008900">
    <property type="protein sequence ID" value="EAA09402.5"/>
    <property type="molecule type" value="Genomic_DNA"/>
</dbReference>
<dbReference type="RefSeq" id="XP_313906.4">
    <property type="nucleotide sequence ID" value="XM_313906.4"/>
</dbReference>
<dbReference type="FunCoup" id="Q7PQ25">
    <property type="interactions" value="158"/>
</dbReference>
<dbReference type="PaxDb" id="7165-AGAP005037-PA"/>
<dbReference type="VEuPathDB" id="VectorBase:AGAMI1_004092"/>
<dbReference type="VEuPathDB" id="VectorBase:AGAP005037"/>
<dbReference type="eggNOG" id="ENOG502QUBF">
    <property type="taxonomic scope" value="Eukaryota"/>
</dbReference>
<dbReference type="InParanoid" id="Q7PQ25"/>
<dbReference type="OMA" id="MSEPDMP"/>
<dbReference type="OrthoDB" id="6022652at2759"/>
<dbReference type="PhylomeDB" id="Q7PQ25"/>
<dbReference type="Proteomes" id="UP000007062">
    <property type="component" value="Chromosome 2L"/>
</dbReference>
<dbReference type="GO" id="GO:0005737">
    <property type="term" value="C:cytoplasm"/>
    <property type="evidence" value="ECO:0000318"/>
    <property type="project" value="GO_Central"/>
</dbReference>
<dbReference type="Gene3D" id="1.20.58.1540">
    <property type="entry name" value="Actin interacting protein 3, C-terminal domain"/>
    <property type="match status" value="1"/>
</dbReference>
<dbReference type="InterPro" id="IPR022782">
    <property type="entry name" value="AIP3-like_C"/>
</dbReference>
<dbReference type="InterPro" id="IPR051825">
    <property type="entry name" value="SRCIN1"/>
</dbReference>
<dbReference type="PANTHER" id="PTHR22741:SF10">
    <property type="entry name" value="COILED-COIL DOMAIN-CONTAINING PROTEIN CG32809"/>
    <property type="match status" value="1"/>
</dbReference>
<dbReference type="PANTHER" id="PTHR22741">
    <property type="entry name" value="P140CAP/SNIP-RELATED"/>
    <property type="match status" value="1"/>
</dbReference>
<dbReference type="Pfam" id="PF03915">
    <property type="entry name" value="AIP3"/>
    <property type="match status" value="2"/>
</dbReference>
<feature type="chain" id="PRO_0000311724" description="Coiled-coil domain-containing protein AGAP005037">
    <location>
        <begin position="1"/>
        <end position="1102"/>
    </location>
</feature>
<feature type="region of interest" description="Disordered" evidence="2">
    <location>
        <begin position="1"/>
        <end position="69"/>
    </location>
</feature>
<feature type="region of interest" description="Disordered" evidence="2">
    <location>
        <begin position="295"/>
        <end position="318"/>
    </location>
</feature>
<feature type="region of interest" description="Disordered" evidence="2">
    <location>
        <begin position="450"/>
        <end position="475"/>
    </location>
</feature>
<feature type="region of interest" description="Disordered" evidence="2">
    <location>
        <begin position="489"/>
        <end position="539"/>
    </location>
</feature>
<feature type="region of interest" description="Disordered" evidence="2">
    <location>
        <begin position="745"/>
        <end position="774"/>
    </location>
</feature>
<feature type="region of interest" description="Disordered" evidence="2">
    <location>
        <begin position="832"/>
        <end position="958"/>
    </location>
</feature>
<feature type="region of interest" description="Disordered" evidence="2">
    <location>
        <begin position="1031"/>
        <end position="1087"/>
    </location>
</feature>
<feature type="coiled-coil region" evidence="1">
    <location>
        <begin position="405"/>
        <end position="430"/>
    </location>
</feature>
<feature type="coiled-coil region" evidence="1">
    <location>
        <begin position="554"/>
        <end position="579"/>
    </location>
</feature>
<feature type="coiled-coil region" evidence="1">
    <location>
        <begin position="614"/>
        <end position="654"/>
    </location>
</feature>
<feature type="compositionally biased region" description="Basic and acidic residues" evidence="2">
    <location>
        <begin position="1"/>
        <end position="11"/>
    </location>
</feature>
<feature type="compositionally biased region" description="Low complexity" evidence="2">
    <location>
        <begin position="12"/>
        <end position="21"/>
    </location>
</feature>
<feature type="compositionally biased region" description="Basic and acidic residues" evidence="2">
    <location>
        <begin position="50"/>
        <end position="65"/>
    </location>
</feature>
<feature type="compositionally biased region" description="Polar residues" evidence="2">
    <location>
        <begin position="832"/>
        <end position="849"/>
    </location>
</feature>
<feature type="compositionally biased region" description="Pro residues" evidence="2">
    <location>
        <begin position="867"/>
        <end position="881"/>
    </location>
</feature>
<feature type="compositionally biased region" description="Low complexity" evidence="2">
    <location>
        <begin position="904"/>
        <end position="918"/>
    </location>
</feature>
<feature type="compositionally biased region" description="Polar residues" evidence="2">
    <location>
        <begin position="936"/>
        <end position="958"/>
    </location>
</feature>
<sequence>MLIRWKSKDKSSSSTSSSSSTSKKKRKGRESEDDWQNDKSNRNQPTDQAIDDRRRSARSREDPRRHTLGGDMLQWHKECPHALTIARLSYFHSPFCLYPLLPQQTPQMRVYTPTNQGPLFDDDPGIMSEAETASTGFRRGGKQRSSLPVVRTPSKTLERPLGLVFLQYRSETKRALLPNEITSIDTVRALFVRSFPRQLTMQYLEGPNVKIYIHDSSKDMFYELEDVRSHLREIRDRSVLRLFESNEVSAPQVLPGGQNIPQPLQPAAIPNQWDQEQSYFSEPEFDSEYQHQHIHKSKQPTKTPYYVGTTQTLPRGMYSDRTKGAIDGYMSSPERSGASRGAYEEPYYSQYGTRSATVTPIIDEEQGDISIADDQYAMYGVKNVGRIPRVPPNQMYDHTRSEDLHRIRVEHMERQLANLTGLVQKALTQNPQLPLVNNSPNILNIPGQYRNAEATGDGTVCTREKPPKLGKSTCHKSVSFEKSVSFSDDIQGVPKSHSPQHSADTKPPKPAIKSSTLPRTSSQERDRLKPPPPPKPLVMIAGNQYRTDLTLAPEVYNQLRGLQKKAMDLRTEVRTLRRLTQTQAVAVREDIKDTFMRIRATLLSNSGFVWGQGDKERTNLTREEEIYKQEVIRLEKDLADLESSVEGLRGEVINRRTRVNMVAVEDMALVLSRASKTVAELKMRFPVLQQGLRNLISNEMEHVCREEAFLKDEPDRLENALRRCKKLTGTLVTLKRLASVQEQRLPIPDTAGTDETIKPPETHNNVNKPIPSPRLGTVVASGGIAPENALDALLDXXXXXXXXAALHHADAHRPDDSTSDDSSQTLQNSITTKISQSQLYPSEPVSSNVGLRRLHSYPSGSDTDTSPPQPTRPTTGKPPVPERNAELLSKVNNKRVPPPPPPRTSSRSPLASPTSPHVPQHHRGQQQQQPAVTLSDCEQQQRTSEGTDSGSESVCSDNSQRQLALELRHQELLKKQRQLQEQYQRLQQMSKNAVPLAPTTMNHDIKKTGSESNLPLKMGYNMTVSGSMKNLCGGSGDPTLPFDPSQGSVANNVDHQDGGGSDSSTGGPNSLDGVAIGANGSVGTLPPHLTKTTNKVYETDIL</sequence>
<gene>
    <name type="ORF">AGAP005037</name>
</gene>
<proteinExistence type="predicted"/>
<reference evidence="3" key="1">
    <citation type="journal article" date="2002" name="Science">
        <title>The genome sequence of the malaria mosquito Anopheles gambiae.</title>
        <authorList>
            <person name="Holt R.A."/>
            <person name="Subramanian G.M."/>
            <person name="Halpern A."/>
            <person name="Sutton G.G."/>
            <person name="Charlab R."/>
            <person name="Nusskern D.R."/>
            <person name="Wincker P."/>
            <person name="Clark A.G."/>
            <person name="Ribeiro J.M.C."/>
            <person name="Wides R."/>
            <person name="Salzberg S.L."/>
            <person name="Loftus B.J."/>
            <person name="Yandell M.D."/>
            <person name="Majoros W.H."/>
            <person name="Rusch D.B."/>
            <person name="Lai Z."/>
            <person name="Kraft C.L."/>
            <person name="Abril J.F."/>
            <person name="Anthouard V."/>
            <person name="Arensburger P."/>
            <person name="Atkinson P.W."/>
            <person name="Baden H."/>
            <person name="de Berardinis V."/>
            <person name="Baldwin D."/>
            <person name="Benes V."/>
            <person name="Biedler J."/>
            <person name="Blass C."/>
            <person name="Bolanos R."/>
            <person name="Boscus D."/>
            <person name="Barnstead M."/>
            <person name="Cai S."/>
            <person name="Center A."/>
            <person name="Chaturverdi K."/>
            <person name="Christophides G.K."/>
            <person name="Chrystal M.A.M."/>
            <person name="Clamp M."/>
            <person name="Cravchik A."/>
            <person name="Curwen V."/>
            <person name="Dana A."/>
            <person name="Delcher A."/>
            <person name="Dew I."/>
            <person name="Evans C.A."/>
            <person name="Flanigan M."/>
            <person name="Grundschober-Freimoser A."/>
            <person name="Friedli L."/>
            <person name="Gu Z."/>
            <person name="Guan P."/>
            <person name="Guigo R."/>
            <person name="Hillenmeyer M.E."/>
            <person name="Hladun S.L."/>
            <person name="Hogan J.R."/>
            <person name="Hong Y.S."/>
            <person name="Hoover J."/>
            <person name="Jaillon O."/>
            <person name="Ke Z."/>
            <person name="Kodira C.D."/>
            <person name="Kokoza E."/>
            <person name="Koutsos A."/>
            <person name="Letunic I."/>
            <person name="Levitsky A.A."/>
            <person name="Liang Y."/>
            <person name="Lin J.-J."/>
            <person name="Lobo N.F."/>
            <person name="Lopez J.R."/>
            <person name="Malek J.A."/>
            <person name="McIntosh T.C."/>
            <person name="Meister S."/>
            <person name="Miller J.R."/>
            <person name="Mobarry C."/>
            <person name="Mongin E."/>
            <person name="Murphy S.D."/>
            <person name="O'Brochta D.A."/>
            <person name="Pfannkoch C."/>
            <person name="Qi R."/>
            <person name="Regier M.A."/>
            <person name="Remington K."/>
            <person name="Shao H."/>
            <person name="Sharakhova M.V."/>
            <person name="Sitter C.D."/>
            <person name="Shetty J."/>
            <person name="Smith T.J."/>
            <person name="Strong R."/>
            <person name="Sun J."/>
            <person name="Thomasova D."/>
            <person name="Ton L.Q."/>
            <person name="Topalis P."/>
            <person name="Tu Z.J."/>
            <person name="Unger M.F."/>
            <person name="Walenz B."/>
            <person name="Wang A.H."/>
            <person name="Wang J."/>
            <person name="Wang M."/>
            <person name="Wang X."/>
            <person name="Woodford K.J."/>
            <person name="Wortman J.R."/>
            <person name="Wu M."/>
            <person name="Yao A."/>
            <person name="Zdobnov E.M."/>
            <person name="Zhang H."/>
            <person name="Zhao Q."/>
            <person name="Zhao S."/>
            <person name="Zhu S.C."/>
            <person name="Zhimulev I."/>
            <person name="Coluzzi M."/>
            <person name="della Torre A."/>
            <person name="Roth C.W."/>
            <person name="Louis C."/>
            <person name="Kalush F."/>
            <person name="Mural R.J."/>
            <person name="Myers E.W."/>
            <person name="Adams M.D."/>
            <person name="Smith H.O."/>
            <person name="Broder S."/>
            <person name="Gardner M.J."/>
            <person name="Fraser C.M."/>
            <person name="Birney E."/>
            <person name="Bork P."/>
            <person name="Brey P.T."/>
            <person name="Venter J.C."/>
            <person name="Weissenbach J."/>
            <person name="Kafatos F.C."/>
            <person name="Collins F.H."/>
            <person name="Hoffman S.L."/>
        </authorList>
    </citation>
    <scope>NUCLEOTIDE SEQUENCE [LARGE SCALE GENOMIC DNA]</scope>
    <source>
        <strain evidence="3">PEST</strain>
    </source>
</reference>
<evidence type="ECO:0000255" key="1"/>
<evidence type="ECO:0000256" key="2">
    <source>
        <dbReference type="SAM" id="MobiDB-lite"/>
    </source>
</evidence>
<evidence type="ECO:0000312" key="3">
    <source>
        <dbReference type="EMBL" id="EAA09402.5"/>
    </source>
</evidence>